<reference key="1">
    <citation type="journal article" date="1997" name="J. Bacteriol.">
        <title>Complete genome sequence of Methanobacterium thermoautotrophicum deltaH: functional analysis and comparative genomics.</title>
        <authorList>
            <person name="Smith D.R."/>
            <person name="Doucette-Stamm L.A."/>
            <person name="Deloughery C."/>
            <person name="Lee H.-M."/>
            <person name="Dubois J."/>
            <person name="Aldredge T."/>
            <person name="Bashirzadeh R."/>
            <person name="Blakely D."/>
            <person name="Cook R."/>
            <person name="Gilbert K."/>
            <person name="Harrison D."/>
            <person name="Hoang L."/>
            <person name="Keagle P."/>
            <person name="Lumm W."/>
            <person name="Pothier B."/>
            <person name="Qiu D."/>
            <person name="Spadafora R."/>
            <person name="Vicare R."/>
            <person name="Wang Y."/>
            <person name="Wierzbowski J."/>
            <person name="Gibson R."/>
            <person name="Jiwani N."/>
            <person name="Caruso A."/>
            <person name="Bush D."/>
            <person name="Safer H."/>
            <person name="Patwell D."/>
            <person name="Prabhakar S."/>
            <person name="McDougall S."/>
            <person name="Shimer G."/>
            <person name="Goyal A."/>
            <person name="Pietrovski S."/>
            <person name="Church G.M."/>
            <person name="Daniels C.J."/>
            <person name="Mao J.-I."/>
            <person name="Rice P."/>
            <person name="Noelling J."/>
            <person name="Reeve J.N."/>
        </authorList>
    </citation>
    <scope>NUCLEOTIDE SEQUENCE [LARGE SCALE GENOMIC DNA]</scope>
    <source>
        <strain>ATCC 29096 / DSM 1053 / JCM 10044 / NBRC 100330 / Delta H</strain>
    </source>
</reference>
<sequence length="100" mass="11525">MEINIIEEKENPLLNRKEIRFECLYEGESTPKVLEVKNKLVAMLDADKDLLVVDKIDQGFGEPRATGYAKIYESAEKLTEIEPEHVIKKNTEASEEEEEE</sequence>
<gene>
    <name evidence="1" type="primary">rps24e</name>
    <name type="ordered locus">MTH_267</name>
</gene>
<evidence type="ECO:0000255" key="1">
    <source>
        <dbReference type="HAMAP-Rule" id="MF_00545"/>
    </source>
</evidence>
<evidence type="ECO:0000305" key="2"/>
<keyword id="KW-1185">Reference proteome</keyword>
<keyword id="KW-0687">Ribonucleoprotein</keyword>
<keyword id="KW-0689">Ribosomal protein</keyword>
<protein>
    <recommendedName>
        <fullName evidence="1">Small ribosomal subunit protein eS24</fullName>
    </recommendedName>
    <alternativeName>
        <fullName evidence="2">30S ribosomal protein S24e</fullName>
    </alternativeName>
</protein>
<name>RS24_METTH</name>
<organism>
    <name type="scientific">Methanothermobacter thermautotrophicus (strain ATCC 29096 / DSM 1053 / JCM 10044 / NBRC 100330 / Delta H)</name>
    <name type="common">Methanobacterium thermoautotrophicum</name>
    <dbReference type="NCBI Taxonomy" id="187420"/>
    <lineage>
        <taxon>Archaea</taxon>
        <taxon>Methanobacteriati</taxon>
        <taxon>Methanobacteriota</taxon>
        <taxon>Methanomada group</taxon>
        <taxon>Methanobacteria</taxon>
        <taxon>Methanobacteriales</taxon>
        <taxon>Methanobacteriaceae</taxon>
        <taxon>Methanothermobacter</taxon>
    </lineage>
</organism>
<accession>O26367</accession>
<dbReference type="EMBL" id="AE000666">
    <property type="protein sequence ID" value="AAB84773.1"/>
    <property type="molecule type" value="Genomic_DNA"/>
</dbReference>
<dbReference type="PIR" id="F69133">
    <property type="entry name" value="F69133"/>
</dbReference>
<dbReference type="RefSeq" id="WP_010875906.1">
    <property type="nucleotide sequence ID" value="NC_000916.1"/>
</dbReference>
<dbReference type="SMR" id="O26367"/>
<dbReference type="FunCoup" id="O26367">
    <property type="interactions" value="57"/>
</dbReference>
<dbReference type="STRING" id="187420.MTH_267"/>
<dbReference type="PaxDb" id="187420-MTH_267"/>
<dbReference type="EnsemblBacteria" id="AAB84773">
    <property type="protein sequence ID" value="AAB84773"/>
    <property type="gene ID" value="MTH_267"/>
</dbReference>
<dbReference type="KEGG" id="mth:MTH_267"/>
<dbReference type="PATRIC" id="fig|187420.15.peg.236"/>
<dbReference type="HOGENOM" id="CLU_107248_3_1_2"/>
<dbReference type="InParanoid" id="O26367"/>
<dbReference type="Proteomes" id="UP000005223">
    <property type="component" value="Chromosome"/>
</dbReference>
<dbReference type="GO" id="GO:1990904">
    <property type="term" value="C:ribonucleoprotein complex"/>
    <property type="evidence" value="ECO:0007669"/>
    <property type="project" value="UniProtKB-KW"/>
</dbReference>
<dbReference type="GO" id="GO:0005840">
    <property type="term" value="C:ribosome"/>
    <property type="evidence" value="ECO:0007669"/>
    <property type="project" value="UniProtKB-KW"/>
</dbReference>
<dbReference type="GO" id="GO:0003735">
    <property type="term" value="F:structural constituent of ribosome"/>
    <property type="evidence" value="ECO:0007669"/>
    <property type="project" value="InterPro"/>
</dbReference>
<dbReference type="GO" id="GO:0006412">
    <property type="term" value="P:translation"/>
    <property type="evidence" value="ECO:0007669"/>
    <property type="project" value="UniProtKB-UniRule"/>
</dbReference>
<dbReference type="Gene3D" id="3.30.70.330">
    <property type="match status" value="1"/>
</dbReference>
<dbReference type="HAMAP" id="MF_00545">
    <property type="entry name" value="Ribosomal_eS24"/>
    <property type="match status" value="1"/>
</dbReference>
<dbReference type="InterPro" id="IPR012677">
    <property type="entry name" value="Nucleotide-bd_a/b_plait_sf"/>
</dbReference>
<dbReference type="InterPro" id="IPR001976">
    <property type="entry name" value="Ribosomal_eS24"/>
</dbReference>
<dbReference type="InterPro" id="IPR018098">
    <property type="entry name" value="Ribosomal_eS24_CS"/>
</dbReference>
<dbReference type="InterPro" id="IPR012678">
    <property type="entry name" value="Ribosomal_uL23/eL15/eS24_sf"/>
</dbReference>
<dbReference type="PANTHER" id="PTHR10496">
    <property type="entry name" value="40S RIBOSOMAL PROTEIN S24"/>
    <property type="match status" value="1"/>
</dbReference>
<dbReference type="Pfam" id="PF01282">
    <property type="entry name" value="Ribosomal_S24e"/>
    <property type="match status" value="1"/>
</dbReference>
<dbReference type="SUPFAM" id="SSF54189">
    <property type="entry name" value="Ribosomal proteins S24e, L23 and L15e"/>
    <property type="match status" value="1"/>
</dbReference>
<dbReference type="PROSITE" id="PS00529">
    <property type="entry name" value="RIBOSOMAL_S24E"/>
    <property type="match status" value="1"/>
</dbReference>
<proteinExistence type="inferred from homology"/>
<feature type="chain" id="PRO_0000137647" description="Small ribosomal subunit protein eS24">
    <location>
        <begin position="1"/>
        <end position="100"/>
    </location>
</feature>
<comment type="similarity">
    <text evidence="1">Belongs to the eukaryotic ribosomal protein eS24 family.</text>
</comment>